<reference key="1">
    <citation type="submission" date="2002-12" db="EMBL/GenBank/DDBJ databases">
        <title>A novel family of plant monosaccharide transporters is involved in a new type of eukaryotic sugar sensing.</title>
        <authorList>
            <person name="Stamme C."/>
            <person name="Tjaden J."/>
            <person name="Trentmann O."/>
            <person name="Emmerlich V."/>
            <person name="Neuhaus E."/>
        </authorList>
    </citation>
    <scope>NUCLEOTIDE SEQUENCE [MRNA] (ISOFORM 1)</scope>
</reference>
<reference key="2">
    <citation type="journal article" date="1999" name="Nature">
        <title>Sequence and analysis of chromosome 4 of the plant Arabidopsis thaliana.</title>
        <authorList>
            <person name="Mayer K.F.X."/>
            <person name="Schueller C."/>
            <person name="Wambutt R."/>
            <person name="Murphy G."/>
            <person name="Volckaert G."/>
            <person name="Pohl T."/>
            <person name="Duesterhoeft A."/>
            <person name="Stiekema W."/>
            <person name="Entian K.-D."/>
            <person name="Terryn N."/>
            <person name="Harris B."/>
            <person name="Ansorge W."/>
            <person name="Brandt P."/>
            <person name="Grivell L.A."/>
            <person name="Rieger M."/>
            <person name="Weichselgartner M."/>
            <person name="de Simone V."/>
            <person name="Obermaier B."/>
            <person name="Mache R."/>
            <person name="Mueller M."/>
            <person name="Kreis M."/>
            <person name="Delseny M."/>
            <person name="Puigdomenech P."/>
            <person name="Watson M."/>
            <person name="Schmidtheini T."/>
            <person name="Reichert B."/>
            <person name="Portetelle D."/>
            <person name="Perez-Alonso M."/>
            <person name="Boutry M."/>
            <person name="Bancroft I."/>
            <person name="Vos P."/>
            <person name="Hoheisel J."/>
            <person name="Zimmermann W."/>
            <person name="Wedler H."/>
            <person name="Ridley P."/>
            <person name="Langham S.-A."/>
            <person name="McCullagh B."/>
            <person name="Bilham L."/>
            <person name="Robben J."/>
            <person name="van der Schueren J."/>
            <person name="Grymonprez B."/>
            <person name="Chuang Y.-J."/>
            <person name="Vandenbussche F."/>
            <person name="Braeken M."/>
            <person name="Weltjens I."/>
            <person name="Voet M."/>
            <person name="Bastiaens I."/>
            <person name="Aert R."/>
            <person name="Defoor E."/>
            <person name="Weitzenegger T."/>
            <person name="Bothe G."/>
            <person name="Ramsperger U."/>
            <person name="Hilbert H."/>
            <person name="Braun M."/>
            <person name="Holzer E."/>
            <person name="Brandt A."/>
            <person name="Peters S."/>
            <person name="van Staveren M."/>
            <person name="Dirkse W."/>
            <person name="Mooijman P."/>
            <person name="Klein Lankhorst R."/>
            <person name="Rose M."/>
            <person name="Hauf J."/>
            <person name="Koetter P."/>
            <person name="Berneiser S."/>
            <person name="Hempel S."/>
            <person name="Feldpausch M."/>
            <person name="Lamberth S."/>
            <person name="Van den Daele H."/>
            <person name="De Keyser A."/>
            <person name="Buysshaert C."/>
            <person name="Gielen J."/>
            <person name="Villarroel R."/>
            <person name="De Clercq R."/>
            <person name="van Montagu M."/>
            <person name="Rogers J."/>
            <person name="Cronin A."/>
            <person name="Quail M.A."/>
            <person name="Bray-Allen S."/>
            <person name="Clark L."/>
            <person name="Doggett J."/>
            <person name="Hall S."/>
            <person name="Kay M."/>
            <person name="Lennard N."/>
            <person name="McLay K."/>
            <person name="Mayes R."/>
            <person name="Pettett A."/>
            <person name="Rajandream M.A."/>
            <person name="Lyne M."/>
            <person name="Benes V."/>
            <person name="Rechmann S."/>
            <person name="Borkova D."/>
            <person name="Bloecker H."/>
            <person name="Scharfe M."/>
            <person name="Grimm M."/>
            <person name="Loehnert T.-H."/>
            <person name="Dose S."/>
            <person name="de Haan M."/>
            <person name="Maarse A.C."/>
            <person name="Schaefer M."/>
            <person name="Mueller-Auer S."/>
            <person name="Gabel C."/>
            <person name="Fuchs M."/>
            <person name="Fartmann B."/>
            <person name="Granderath K."/>
            <person name="Dauner D."/>
            <person name="Herzl A."/>
            <person name="Neumann S."/>
            <person name="Argiriou A."/>
            <person name="Vitale D."/>
            <person name="Liguori R."/>
            <person name="Piravandi E."/>
            <person name="Massenet O."/>
            <person name="Quigley F."/>
            <person name="Clabauld G."/>
            <person name="Muendlein A."/>
            <person name="Felber R."/>
            <person name="Schnabl S."/>
            <person name="Hiller R."/>
            <person name="Schmidt W."/>
            <person name="Lecharny A."/>
            <person name="Aubourg S."/>
            <person name="Chefdor F."/>
            <person name="Cooke R."/>
            <person name="Berger C."/>
            <person name="Monfort A."/>
            <person name="Casacuberta E."/>
            <person name="Gibbons T."/>
            <person name="Weber N."/>
            <person name="Vandenbol M."/>
            <person name="Bargues M."/>
            <person name="Terol J."/>
            <person name="Torres A."/>
            <person name="Perez-Perez A."/>
            <person name="Purnelle B."/>
            <person name="Bent E."/>
            <person name="Johnson S."/>
            <person name="Tacon D."/>
            <person name="Jesse T."/>
            <person name="Heijnen L."/>
            <person name="Schwarz S."/>
            <person name="Scholler P."/>
            <person name="Heber S."/>
            <person name="Francs P."/>
            <person name="Bielke C."/>
            <person name="Frishman D."/>
            <person name="Haase D."/>
            <person name="Lemcke K."/>
            <person name="Mewes H.-W."/>
            <person name="Stocker S."/>
            <person name="Zaccaria P."/>
            <person name="Bevan M."/>
            <person name="Wilson R.K."/>
            <person name="de la Bastide M."/>
            <person name="Habermann K."/>
            <person name="Parnell L."/>
            <person name="Dedhia N."/>
            <person name="Gnoj L."/>
            <person name="Schutz K."/>
            <person name="Huang E."/>
            <person name="Spiegel L."/>
            <person name="Sekhon M."/>
            <person name="Murray J."/>
            <person name="Sheet P."/>
            <person name="Cordes M."/>
            <person name="Abu-Threideh J."/>
            <person name="Stoneking T."/>
            <person name="Kalicki J."/>
            <person name="Graves T."/>
            <person name="Harmon G."/>
            <person name="Edwards J."/>
            <person name="Latreille P."/>
            <person name="Courtney L."/>
            <person name="Cloud J."/>
            <person name="Abbott A."/>
            <person name="Scott K."/>
            <person name="Johnson D."/>
            <person name="Minx P."/>
            <person name="Bentley D."/>
            <person name="Fulton B."/>
            <person name="Miller N."/>
            <person name="Greco T."/>
            <person name="Kemp K."/>
            <person name="Kramer J."/>
            <person name="Fulton L."/>
            <person name="Mardis E."/>
            <person name="Dante M."/>
            <person name="Pepin K."/>
            <person name="Hillier L.W."/>
            <person name="Nelson J."/>
            <person name="Spieth J."/>
            <person name="Ryan E."/>
            <person name="Andrews S."/>
            <person name="Geisel C."/>
            <person name="Layman D."/>
            <person name="Du H."/>
            <person name="Ali J."/>
            <person name="Berghoff A."/>
            <person name="Jones K."/>
            <person name="Drone K."/>
            <person name="Cotton M."/>
            <person name="Joshu C."/>
            <person name="Antonoiu B."/>
            <person name="Zidanic M."/>
            <person name="Strong C."/>
            <person name="Sun H."/>
            <person name="Lamar B."/>
            <person name="Yordan C."/>
            <person name="Ma P."/>
            <person name="Zhong J."/>
            <person name="Preston R."/>
            <person name="Vil D."/>
            <person name="Shekher M."/>
            <person name="Matero A."/>
            <person name="Shah R."/>
            <person name="Swaby I.K."/>
            <person name="O'Shaughnessy A."/>
            <person name="Rodriguez M."/>
            <person name="Hoffman J."/>
            <person name="Till S."/>
            <person name="Granat S."/>
            <person name="Shohdy N."/>
            <person name="Hasegawa A."/>
            <person name="Hameed A."/>
            <person name="Lodhi M."/>
            <person name="Johnson A."/>
            <person name="Chen E."/>
            <person name="Marra M.A."/>
            <person name="Martienssen R."/>
            <person name="McCombie W.R."/>
        </authorList>
    </citation>
    <scope>NUCLEOTIDE SEQUENCE [LARGE SCALE GENOMIC DNA]</scope>
    <source>
        <strain>cv. Columbia</strain>
    </source>
</reference>
<reference key="3">
    <citation type="journal article" date="2017" name="Plant J.">
        <title>Araport11: a complete reannotation of the Arabidopsis thaliana reference genome.</title>
        <authorList>
            <person name="Cheng C.Y."/>
            <person name="Krishnakumar V."/>
            <person name="Chan A.P."/>
            <person name="Thibaud-Nissen F."/>
            <person name="Schobel S."/>
            <person name="Town C.D."/>
        </authorList>
    </citation>
    <scope>GENOME REANNOTATION</scope>
    <source>
        <strain>cv. Columbia</strain>
    </source>
</reference>
<reference key="4">
    <citation type="journal article" date="2003" name="Science">
        <title>Empirical analysis of transcriptional activity in the Arabidopsis genome.</title>
        <authorList>
            <person name="Yamada K."/>
            <person name="Lim J."/>
            <person name="Dale J.M."/>
            <person name="Chen H."/>
            <person name="Shinn P."/>
            <person name="Palm C.J."/>
            <person name="Southwick A.M."/>
            <person name="Wu H.C."/>
            <person name="Kim C.J."/>
            <person name="Nguyen M."/>
            <person name="Pham P.K."/>
            <person name="Cheuk R.F."/>
            <person name="Karlin-Newmann G."/>
            <person name="Liu S.X."/>
            <person name="Lam B."/>
            <person name="Sakano H."/>
            <person name="Wu T."/>
            <person name="Yu G."/>
            <person name="Miranda M."/>
            <person name="Quach H.L."/>
            <person name="Tripp M."/>
            <person name="Chang C.H."/>
            <person name="Lee J.M."/>
            <person name="Toriumi M.J."/>
            <person name="Chan M.M."/>
            <person name="Tang C.C."/>
            <person name="Onodera C.S."/>
            <person name="Deng J.M."/>
            <person name="Akiyama K."/>
            <person name="Ansari Y."/>
            <person name="Arakawa T."/>
            <person name="Banh J."/>
            <person name="Banno F."/>
            <person name="Bowser L."/>
            <person name="Brooks S.Y."/>
            <person name="Carninci P."/>
            <person name="Chao Q."/>
            <person name="Choy N."/>
            <person name="Enju A."/>
            <person name="Goldsmith A.D."/>
            <person name="Gurjal M."/>
            <person name="Hansen N.F."/>
            <person name="Hayashizaki Y."/>
            <person name="Johnson-Hopson C."/>
            <person name="Hsuan V.W."/>
            <person name="Iida K."/>
            <person name="Karnes M."/>
            <person name="Khan S."/>
            <person name="Koesema E."/>
            <person name="Ishida J."/>
            <person name="Jiang P.X."/>
            <person name="Jones T."/>
            <person name="Kawai J."/>
            <person name="Kamiya A."/>
            <person name="Meyers C."/>
            <person name="Nakajima M."/>
            <person name="Narusaka M."/>
            <person name="Seki M."/>
            <person name="Sakurai T."/>
            <person name="Satou M."/>
            <person name="Tamse R."/>
            <person name="Vaysberg M."/>
            <person name="Wallender E.K."/>
            <person name="Wong C."/>
            <person name="Yamamura Y."/>
            <person name="Yuan S."/>
            <person name="Shinozaki K."/>
            <person name="Davis R.W."/>
            <person name="Theologis A."/>
            <person name="Ecker J.R."/>
        </authorList>
    </citation>
    <scope>NUCLEOTIDE SEQUENCE [LARGE SCALE MRNA] (ISOFORM 2)</scope>
    <source>
        <strain>cv. Columbia</strain>
    </source>
</reference>
<reference key="5">
    <citation type="journal article" date="2009" name="DNA Res.">
        <title>Analysis of multiple occurrences of alternative splicing events in Arabidopsis thaliana using novel sequenced full-length cDNAs.</title>
        <authorList>
            <person name="Iida K."/>
            <person name="Fukami-Kobayashi K."/>
            <person name="Toyoda A."/>
            <person name="Sakaki Y."/>
            <person name="Kobayashi M."/>
            <person name="Seki M."/>
            <person name="Shinozaki K."/>
        </authorList>
    </citation>
    <scope>NUCLEOTIDE SEQUENCE [LARGE SCALE MRNA] (ISOFORM 3)</scope>
    <source>
        <strain>cv. Columbia</strain>
        <tissue>Rosette leaf</tissue>
    </source>
</reference>
<reference key="6">
    <citation type="journal article" date="2006" name="BMC Evol. Biol.">
        <title>The monosaccharide transporter gene family in land plants is ancient and shows differential subfamily expression and expansion across lineages.</title>
        <authorList>
            <person name="Johnson D.A."/>
            <person name="Hill J.P."/>
            <person name="Thomas M.A."/>
        </authorList>
    </citation>
    <scope>GENE FAMILY</scope>
</reference>
<reference key="7">
    <citation type="journal article" date="2006" name="Plant Cell">
        <title>Molecular identification and physiological characterization of a novel monosaccharide transporter from Arabidopsis involved in vacuolar sugar transport.</title>
        <authorList>
            <person name="Wormit A."/>
            <person name="Trentmann O."/>
            <person name="Feifer I."/>
            <person name="Lohr C."/>
            <person name="Tjaden J."/>
            <person name="Meyer S."/>
            <person name="Schmidt U."/>
            <person name="Martinoia E."/>
            <person name="Neuhaus H.E."/>
        </authorList>
    </citation>
    <scope>FUNCTION</scope>
    <scope>DISRUPTION PHENOTYPE</scope>
    <scope>SUBCELLULAR LOCATION</scope>
    <scope>TISSUE SPECIFICITY</scope>
    <scope>DEVELOPMENTAL STAGE</scope>
    <scope>INDUCTION BY DROUGHT; SALT; COLD AND SUGAR</scope>
</reference>
<reference key="8">
    <citation type="journal article" date="2007" name="FEBS Lett.">
        <title>Transport of primary metabolites across the plant vacuolar membrane.</title>
        <authorList>
            <person name="Neuhaus H.E."/>
        </authorList>
    </citation>
    <scope>REVIEW ON VACUOLAR TRANSPORTERS</scope>
</reference>
<reference key="9">
    <citation type="journal article" date="2009" name="J. Proteomics">
        <title>Phosphoproteomic analysis of nuclei-enriched fractions from Arabidopsis thaliana.</title>
        <authorList>
            <person name="Jones A.M.E."/>
            <person name="MacLean D."/>
            <person name="Studholme D.J."/>
            <person name="Serna-Sanz A."/>
            <person name="Andreasson E."/>
            <person name="Rathjen J.P."/>
            <person name="Peck S.C."/>
        </authorList>
    </citation>
    <scope>PHOSPHORYLATION [LARGE SCALE ANALYSIS] AT SER-448 (ISOFORM 2)</scope>
    <scope>IDENTIFICATION BY MASS SPECTROMETRY [LARGE SCALE ANALYSIS]</scope>
    <source>
        <strain>cv. Columbia</strain>
    </source>
</reference>
<reference key="10">
    <citation type="journal article" date="2011" name="Plant J.">
        <title>Proton-driven sucrose symport and antiport are provided by the vacuolar transporters SUC4 and TMT1/2.</title>
        <authorList>
            <person name="Schulz A."/>
            <person name="Beyhl D."/>
            <person name="Marten I."/>
            <person name="Wormit A."/>
            <person name="Neuhaus E."/>
            <person name="Poschet G."/>
            <person name="Buettner M."/>
            <person name="Schneider S."/>
            <person name="Sauer N."/>
            <person name="Hedrich R."/>
        </authorList>
    </citation>
    <scope>FUNCTION</scope>
    <scope>TRANSPORTER ACTIVITY</scope>
    <source>
        <strain>cv. Columbia</strain>
    </source>
</reference>
<evidence type="ECO:0000250" key="1">
    <source>
        <dbReference type="UniProtKB" id="Q96290"/>
    </source>
</evidence>
<evidence type="ECO:0000255" key="2"/>
<evidence type="ECO:0000256" key="3">
    <source>
        <dbReference type="SAM" id="MobiDB-lite"/>
    </source>
</evidence>
<evidence type="ECO:0000269" key="4">
    <source>
    </source>
</evidence>
<evidence type="ECO:0000269" key="5">
    <source>
    </source>
</evidence>
<evidence type="ECO:0000303" key="6">
    <source>
    </source>
</evidence>
<evidence type="ECO:0000303" key="7">
    <source>
    </source>
</evidence>
<evidence type="ECO:0000305" key="8"/>
<evidence type="ECO:0000312" key="9">
    <source>
        <dbReference type="Araport" id="AT4G35300"/>
    </source>
</evidence>
<evidence type="ECO:0000312" key="10">
    <source>
        <dbReference type="EMBL" id="CAA18739.1"/>
    </source>
</evidence>
<evidence type="ECO:0007744" key="11">
    <source>
    </source>
</evidence>
<sequence length="729" mass="78525">MSGAVLVAIAAAVGNLLQGWDNATIAGAVLYIKKEFNLESNPSVEGLIVAMSLIGATLITTCSGGVADWLGRRPMLILSSILYFVGSLVMLWSPNVYVLLLGRLLDGFGVGLVVTLVPIYISETAPPEIRGLLNTLPQFTGSGGMFLSYCMVFGMSLMPSPSWRLMLGVLFIPSLVFFFLTVFFLPESPRWLVSKGRMLEAKRVLQRLRGREDVSGEMALLVEGLGIGGETTIEEYIIGPADEVTDDHDIAVDKDQIKLYGAEEGLSWVARPVKGGSTMSVLSRHGSTMSRRQGSLIDPLVTLFGSVHEKMPDTGSMRSALFPHFGSMFSVGGNQPRHEDWDEENLVGEGEDYPSDHGDDSEDDLHSPLISRQTTSMEKDMPHTAHGTLSTFRHGSQVQGAQGEGAGSMGIGGGWQVAWKWTEREDESGQKEEGFPGSRRGSIVSLPGGDGTGEADFVQASALVSQPALYSKDLLKEHTIGPAMVHPSETTKGSIWHDLHDPGVKRALVVGVGLQILQQFSGINGVLYYTPQILEQAGVGILLSNMGISSSSASLLISALTTFVMLPAIAVAMRLMDLSGRRTLLLTTIPILIASLLVLVISNLVHMNSIVHAVLSTVSVVLYFCFFVMGFGPAPNILCSEIFPTRVRGICIAICALTFWICDIIVTYSLPVLLKSIGLAGVFGMYAIVCCISWVFVFIKVPETKGMPLEVITEFFSVGARQAEAAKNE</sequence>
<gene>
    <name evidence="8" type="primary">MSSP2</name>
    <name evidence="7" type="synonym">TMT2</name>
    <name evidence="9" type="ordered locus">At4g35300</name>
    <name evidence="10" type="ORF">F23E12.140</name>
</gene>
<accession>Q8LPQ8</accession>
<accession>C0Z2Y0</accession>
<accession>O65497</accession>
<organism>
    <name type="scientific">Arabidopsis thaliana</name>
    <name type="common">Mouse-ear cress</name>
    <dbReference type="NCBI Taxonomy" id="3702"/>
    <lineage>
        <taxon>Eukaryota</taxon>
        <taxon>Viridiplantae</taxon>
        <taxon>Streptophyta</taxon>
        <taxon>Embryophyta</taxon>
        <taxon>Tracheophyta</taxon>
        <taxon>Spermatophyta</taxon>
        <taxon>Magnoliopsida</taxon>
        <taxon>eudicotyledons</taxon>
        <taxon>Gunneridae</taxon>
        <taxon>Pentapetalae</taxon>
        <taxon>rosids</taxon>
        <taxon>malvids</taxon>
        <taxon>Brassicales</taxon>
        <taxon>Brassicaceae</taxon>
        <taxon>Camelineae</taxon>
        <taxon>Arabidopsis</taxon>
    </lineage>
</organism>
<comment type="function">
    <text evidence="4 5">Sugar proton-coupled antiporter which contributes to vacuolar sugar import (e.g. monosaccharides including glucose, sucrose and fructose), particularly during stress responses (e.g. in response to cold).</text>
</comment>
<comment type="catalytic activity">
    <reaction evidence="5">
        <text>D-glucose(out) + H(+)(in) = D-glucose(in) + H(+)(out)</text>
        <dbReference type="Rhea" id="RHEA:73203"/>
        <dbReference type="ChEBI" id="CHEBI:4167"/>
        <dbReference type="ChEBI" id="CHEBI:15378"/>
    </reaction>
    <physiologicalReaction direction="left-to-right" evidence="5">
        <dbReference type="Rhea" id="RHEA:73204"/>
    </physiologicalReaction>
</comment>
<comment type="catalytic activity">
    <reaction evidence="5">
        <text>sucrose(out) + H(+)(in) = sucrose(in) + H(+)(out)</text>
        <dbReference type="Rhea" id="RHEA:73211"/>
        <dbReference type="ChEBI" id="CHEBI:15378"/>
        <dbReference type="ChEBI" id="CHEBI:17992"/>
    </reaction>
    <physiologicalReaction direction="left-to-right" evidence="5">
        <dbReference type="Rhea" id="RHEA:73212"/>
    </physiologicalReaction>
</comment>
<comment type="subcellular location">
    <subcellularLocation>
        <location evidence="4">Vacuole membrane</location>
        <topology evidence="2">Multi-pass membrane protein</topology>
    </subcellularLocation>
</comment>
<comment type="alternative products">
    <event type="alternative splicing"/>
    <isoform>
        <id>Q8LPQ8-1</id>
        <name>1</name>
        <sequence type="displayed"/>
    </isoform>
    <isoform>
        <id>Q8LPQ8-2</id>
        <name>2</name>
        <sequence type="described" ref="VSP_021553"/>
    </isoform>
    <isoform>
        <id>Q8LPQ8-3</id>
        <name>3</name>
        <sequence type="described" ref="VSP_061686 VSP_021553"/>
    </isoform>
</comment>
<comment type="tissue specificity">
    <text evidence="4">Mostly expressed in roots and stems, and, to a lower extent, in juvenile and adult leaves, and in flower tissues.</text>
</comment>
<comment type="developmental stage">
    <text evidence="4">Low levels in germinating seedlings and in young cotyledons (PubMed:17158605). In young roots, restricted to the steles (PubMed:17158605). In mature leaves, confined to the edge areas (PubMed:17158605). Also detected in undeveloped floral side buds, in petals, and in filaments (PubMed:17158605).</text>
</comment>
<comment type="induction">
    <text evidence="4">Induced by drought, salt, cold and sugars (e.g. glucose, fructose and sucrose).</text>
</comment>
<comment type="disruption phenotype">
    <text evidence="4">Reduced accumulation of glucose and fructose during cold adaptation (PubMed:17158605). Plants lacking both MSSP1 and MSSP2 have reduced fresh weight when grown on high glucose containing medium or in response to cold stress, and exhibit increased glucose cytosolic concentrations leading to the stimulation of mitochondrial respiration (PubMed:17158605). In triple knockout plants missing MSSP1, MSSP2 and MSSP3, reduced accumulation of glucose and fructose during cold adaptation (PubMed:17158605).</text>
</comment>
<comment type="miscellaneous">
    <molecule>Isoform 2</molecule>
    <text evidence="8">May be due to an intron retention.</text>
</comment>
<comment type="similarity">
    <text evidence="8">Belongs to the major facilitator superfamily. Sugar transporter (TC 2.A.1.1) family.</text>
</comment>
<name>MSSP2_ARATH</name>
<dbReference type="EMBL" id="AJ532570">
    <property type="protein sequence ID" value="CAD58692.1"/>
    <property type="molecule type" value="mRNA"/>
</dbReference>
<dbReference type="EMBL" id="AL022604">
    <property type="protein sequence ID" value="CAA18739.1"/>
    <property type="molecule type" value="Genomic_DNA"/>
</dbReference>
<dbReference type="EMBL" id="AL161587">
    <property type="protein sequence ID" value="CAB80247.1"/>
    <property type="molecule type" value="Genomic_DNA"/>
</dbReference>
<dbReference type="EMBL" id="CP002687">
    <property type="protein sequence ID" value="AEE86493.1"/>
    <property type="molecule type" value="Genomic_DNA"/>
</dbReference>
<dbReference type="EMBL" id="CP002687">
    <property type="protein sequence ID" value="AEE86494.1"/>
    <property type="molecule type" value="Genomic_DNA"/>
</dbReference>
<dbReference type="EMBL" id="CP002687">
    <property type="protein sequence ID" value="AEE86495.1"/>
    <property type="molecule type" value="Genomic_DNA"/>
</dbReference>
<dbReference type="EMBL" id="CP002687">
    <property type="protein sequence ID" value="AEE86497.1"/>
    <property type="molecule type" value="Genomic_DNA"/>
</dbReference>
<dbReference type="EMBL" id="CP002687">
    <property type="protein sequence ID" value="ANM66216.1"/>
    <property type="molecule type" value="Genomic_DNA"/>
</dbReference>
<dbReference type="EMBL" id="CP002687">
    <property type="protein sequence ID" value="ANM66217.1"/>
    <property type="molecule type" value="Genomic_DNA"/>
</dbReference>
<dbReference type="EMBL" id="CP002687">
    <property type="protein sequence ID" value="ANM66218.1"/>
    <property type="molecule type" value="Genomic_DNA"/>
</dbReference>
<dbReference type="EMBL" id="CP002687">
    <property type="protein sequence ID" value="ANM66219.1"/>
    <property type="molecule type" value="Genomic_DNA"/>
</dbReference>
<dbReference type="EMBL" id="CP002687">
    <property type="protein sequence ID" value="ANM66220.1"/>
    <property type="molecule type" value="Genomic_DNA"/>
</dbReference>
<dbReference type="EMBL" id="CP002687">
    <property type="protein sequence ID" value="ANM66221.1"/>
    <property type="molecule type" value="Genomic_DNA"/>
</dbReference>
<dbReference type="EMBL" id="AY094465">
    <property type="protein sequence ID" value="AAM19835.1"/>
    <property type="molecule type" value="mRNA"/>
</dbReference>
<dbReference type="EMBL" id="AK318944">
    <property type="protein sequence ID" value="BAH57059.1"/>
    <property type="molecule type" value="mRNA"/>
</dbReference>
<dbReference type="PIR" id="T06127">
    <property type="entry name" value="T06127"/>
</dbReference>
<dbReference type="RefSeq" id="NP_001154287.1">
    <molecule id="Q8LPQ8-1"/>
    <property type="nucleotide sequence ID" value="NM_001160815.2"/>
</dbReference>
<dbReference type="RefSeq" id="NP_001190923.1">
    <molecule id="Q8LPQ8-2"/>
    <property type="nucleotide sequence ID" value="NM_001203994.1"/>
</dbReference>
<dbReference type="RefSeq" id="NP_001328125.1">
    <molecule id="Q8LPQ8-2"/>
    <property type="nucleotide sequence ID" value="NM_001342339.1"/>
</dbReference>
<dbReference type="RefSeq" id="NP_001328126.1">
    <molecule id="Q8LPQ8-2"/>
    <property type="nucleotide sequence ID" value="NM_001342340.1"/>
</dbReference>
<dbReference type="RefSeq" id="NP_001328127.1">
    <molecule id="Q8LPQ8-2"/>
    <property type="nucleotide sequence ID" value="NM_001342343.1"/>
</dbReference>
<dbReference type="RefSeq" id="NP_001328128.1">
    <molecule id="Q8LPQ8-1"/>
    <property type="nucleotide sequence ID" value="NM_001342344.1"/>
</dbReference>
<dbReference type="RefSeq" id="NP_001328129.1">
    <molecule id="Q8LPQ8-2"/>
    <property type="nucleotide sequence ID" value="NM_001342341.1"/>
</dbReference>
<dbReference type="RefSeq" id="NP_001328130.1">
    <molecule id="Q8LPQ8-2"/>
    <property type="nucleotide sequence ID" value="NM_001342342.1"/>
</dbReference>
<dbReference type="RefSeq" id="NP_195256.3">
    <molecule id="Q8LPQ8-1"/>
    <property type="nucleotide sequence ID" value="NM_119696.5"/>
</dbReference>
<dbReference type="RefSeq" id="NP_849565.1">
    <molecule id="Q8LPQ8-2"/>
    <property type="nucleotide sequence ID" value="NM_179234.2"/>
</dbReference>
<dbReference type="BioGRID" id="14966">
    <property type="interactions" value="8"/>
</dbReference>
<dbReference type="FunCoup" id="Q8LPQ8">
    <property type="interactions" value="214"/>
</dbReference>
<dbReference type="IntAct" id="Q8LPQ8">
    <property type="interactions" value="5"/>
</dbReference>
<dbReference type="STRING" id="3702.Q8LPQ8"/>
<dbReference type="TCDB" id="2.A.1.1.84">
    <property type="family name" value="the major facilitator superfamily (mfs)"/>
</dbReference>
<dbReference type="iPTMnet" id="Q8LPQ8"/>
<dbReference type="SwissPalm" id="Q8LPQ8"/>
<dbReference type="PaxDb" id="3702-AT4G35300.1"/>
<dbReference type="EnsemblPlants" id="AT4G35300.1">
    <molecule id="Q8LPQ8-2"/>
    <property type="protein sequence ID" value="AT4G35300.1"/>
    <property type="gene ID" value="AT4G35300"/>
</dbReference>
<dbReference type="EnsemblPlants" id="AT4G35300.10">
    <molecule id="Q8LPQ8-2"/>
    <property type="protein sequence ID" value="AT4G35300.10"/>
    <property type="gene ID" value="AT4G35300"/>
</dbReference>
<dbReference type="EnsemblPlants" id="AT4G35300.11">
    <molecule id="Q8LPQ8-2"/>
    <property type="protein sequence ID" value="AT4G35300.11"/>
    <property type="gene ID" value="AT4G35300"/>
</dbReference>
<dbReference type="EnsemblPlants" id="AT4G35300.2">
    <molecule id="Q8LPQ8-1"/>
    <property type="protein sequence ID" value="AT4G35300.2"/>
    <property type="gene ID" value="AT4G35300"/>
</dbReference>
<dbReference type="EnsemblPlants" id="AT4G35300.3">
    <molecule id="Q8LPQ8-1"/>
    <property type="protein sequence ID" value="AT4G35300.3"/>
    <property type="gene ID" value="AT4G35300"/>
</dbReference>
<dbReference type="EnsemblPlants" id="AT4G35300.4">
    <molecule id="Q8LPQ8-2"/>
    <property type="protein sequence ID" value="AT4G35300.4"/>
    <property type="gene ID" value="AT4G35300"/>
</dbReference>
<dbReference type="EnsemblPlants" id="AT4G35300.6">
    <molecule id="Q8LPQ8-2"/>
    <property type="protein sequence ID" value="AT4G35300.6"/>
    <property type="gene ID" value="AT4G35300"/>
</dbReference>
<dbReference type="EnsemblPlants" id="AT4G35300.7">
    <molecule id="Q8LPQ8-2"/>
    <property type="protein sequence ID" value="AT4G35300.7"/>
    <property type="gene ID" value="AT4G35300"/>
</dbReference>
<dbReference type="EnsemblPlants" id="AT4G35300.8">
    <molecule id="Q8LPQ8-2"/>
    <property type="protein sequence ID" value="AT4G35300.8"/>
    <property type="gene ID" value="AT4G35300"/>
</dbReference>
<dbReference type="EnsemblPlants" id="AT4G35300.9">
    <molecule id="Q8LPQ8-1"/>
    <property type="protein sequence ID" value="AT4G35300.9"/>
    <property type="gene ID" value="AT4G35300"/>
</dbReference>
<dbReference type="GeneID" id="829684"/>
<dbReference type="Gramene" id="AT4G35300.1">
    <molecule id="Q8LPQ8-2"/>
    <property type="protein sequence ID" value="AT4G35300.1"/>
    <property type="gene ID" value="AT4G35300"/>
</dbReference>
<dbReference type="Gramene" id="AT4G35300.10">
    <molecule id="Q8LPQ8-2"/>
    <property type="protein sequence ID" value="AT4G35300.10"/>
    <property type="gene ID" value="AT4G35300"/>
</dbReference>
<dbReference type="Gramene" id="AT4G35300.11">
    <molecule id="Q8LPQ8-2"/>
    <property type="protein sequence ID" value="AT4G35300.11"/>
    <property type="gene ID" value="AT4G35300"/>
</dbReference>
<dbReference type="Gramene" id="AT4G35300.2">
    <molecule id="Q8LPQ8-1"/>
    <property type="protein sequence ID" value="AT4G35300.2"/>
    <property type="gene ID" value="AT4G35300"/>
</dbReference>
<dbReference type="Gramene" id="AT4G35300.3">
    <molecule id="Q8LPQ8-1"/>
    <property type="protein sequence ID" value="AT4G35300.3"/>
    <property type="gene ID" value="AT4G35300"/>
</dbReference>
<dbReference type="Gramene" id="AT4G35300.4">
    <molecule id="Q8LPQ8-2"/>
    <property type="protein sequence ID" value="AT4G35300.4"/>
    <property type="gene ID" value="AT4G35300"/>
</dbReference>
<dbReference type="Gramene" id="AT4G35300.6">
    <molecule id="Q8LPQ8-2"/>
    <property type="protein sequence ID" value="AT4G35300.6"/>
    <property type="gene ID" value="AT4G35300"/>
</dbReference>
<dbReference type="Gramene" id="AT4G35300.7">
    <molecule id="Q8LPQ8-2"/>
    <property type="protein sequence ID" value="AT4G35300.7"/>
    <property type="gene ID" value="AT4G35300"/>
</dbReference>
<dbReference type="Gramene" id="AT4G35300.8">
    <molecule id="Q8LPQ8-2"/>
    <property type="protein sequence ID" value="AT4G35300.8"/>
    <property type="gene ID" value="AT4G35300"/>
</dbReference>
<dbReference type="Gramene" id="AT4G35300.9">
    <molecule id="Q8LPQ8-1"/>
    <property type="protein sequence ID" value="AT4G35300.9"/>
    <property type="gene ID" value="AT4G35300"/>
</dbReference>
<dbReference type="KEGG" id="ath:AT4G35300"/>
<dbReference type="Araport" id="AT4G35300"/>
<dbReference type="TAIR" id="AT4G35300">
    <property type="gene designation" value="TMT2"/>
</dbReference>
<dbReference type="eggNOG" id="KOG0254">
    <property type="taxonomic scope" value="Eukaryota"/>
</dbReference>
<dbReference type="InParanoid" id="Q8LPQ8"/>
<dbReference type="OMA" id="VVCVIAW"/>
<dbReference type="OrthoDB" id="6339427at2759"/>
<dbReference type="PhylomeDB" id="Q8LPQ8"/>
<dbReference type="PRO" id="PR:Q8LPQ8"/>
<dbReference type="Proteomes" id="UP000006548">
    <property type="component" value="Chromosome 4"/>
</dbReference>
<dbReference type="ExpressionAtlas" id="Q8LPQ8">
    <property type="expression patterns" value="baseline and differential"/>
</dbReference>
<dbReference type="GO" id="GO:0005794">
    <property type="term" value="C:Golgi apparatus"/>
    <property type="evidence" value="ECO:0007005"/>
    <property type="project" value="TAIR"/>
</dbReference>
<dbReference type="GO" id="GO:0000325">
    <property type="term" value="C:plant-type vacuole"/>
    <property type="evidence" value="ECO:0007005"/>
    <property type="project" value="TAIR"/>
</dbReference>
<dbReference type="GO" id="GO:0009705">
    <property type="term" value="C:plant-type vacuole membrane"/>
    <property type="evidence" value="ECO:0000314"/>
    <property type="project" value="UniProtKB"/>
</dbReference>
<dbReference type="GO" id="GO:0005886">
    <property type="term" value="C:plasma membrane"/>
    <property type="evidence" value="ECO:0007005"/>
    <property type="project" value="TAIR"/>
</dbReference>
<dbReference type="GO" id="GO:0022857">
    <property type="term" value="F:transmembrane transporter activity"/>
    <property type="evidence" value="ECO:0007669"/>
    <property type="project" value="InterPro"/>
</dbReference>
<dbReference type="GO" id="GO:0009409">
    <property type="term" value="P:response to cold"/>
    <property type="evidence" value="ECO:0000270"/>
    <property type="project" value="UniProtKB"/>
</dbReference>
<dbReference type="GO" id="GO:0009750">
    <property type="term" value="P:response to fructose"/>
    <property type="evidence" value="ECO:0000270"/>
    <property type="project" value="UniProtKB"/>
</dbReference>
<dbReference type="GO" id="GO:0009749">
    <property type="term" value="P:response to glucose"/>
    <property type="evidence" value="ECO:0000270"/>
    <property type="project" value="UniProtKB"/>
</dbReference>
<dbReference type="GO" id="GO:1902074">
    <property type="term" value="P:response to salt"/>
    <property type="evidence" value="ECO:0000270"/>
    <property type="project" value="UniProtKB"/>
</dbReference>
<dbReference type="GO" id="GO:0009744">
    <property type="term" value="P:response to sucrose"/>
    <property type="evidence" value="ECO:0000270"/>
    <property type="project" value="UniProtKB"/>
</dbReference>
<dbReference type="GO" id="GO:0009414">
    <property type="term" value="P:response to water deprivation"/>
    <property type="evidence" value="ECO:0000270"/>
    <property type="project" value="UniProtKB"/>
</dbReference>
<dbReference type="FunFam" id="1.20.1250.20:FF:000108">
    <property type="entry name" value="Monosaccharide-sensing protein 2"/>
    <property type="match status" value="1"/>
</dbReference>
<dbReference type="FunFam" id="1.20.1250.20:FF:000103">
    <property type="entry name" value="monosaccharide-sensing protein 2"/>
    <property type="match status" value="1"/>
</dbReference>
<dbReference type="Gene3D" id="1.20.1250.20">
    <property type="entry name" value="MFS general substrate transporter like domains"/>
    <property type="match status" value="2"/>
</dbReference>
<dbReference type="InterPro" id="IPR020846">
    <property type="entry name" value="MFS_dom"/>
</dbReference>
<dbReference type="InterPro" id="IPR005828">
    <property type="entry name" value="MFS_sugar_transport-like"/>
</dbReference>
<dbReference type="InterPro" id="IPR036259">
    <property type="entry name" value="MFS_trans_sf"/>
</dbReference>
<dbReference type="InterPro" id="IPR050814">
    <property type="entry name" value="Myo-inositol_Transporter"/>
</dbReference>
<dbReference type="InterPro" id="IPR003663">
    <property type="entry name" value="Sugar/inositol_transpt"/>
</dbReference>
<dbReference type="InterPro" id="IPR005829">
    <property type="entry name" value="Sugar_transporter_CS"/>
</dbReference>
<dbReference type="PANTHER" id="PTHR48020">
    <property type="entry name" value="PROTON MYO-INOSITOL COTRANSPORTER"/>
    <property type="match status" value="1"/>
</dbReference>
<dbReference type="PANTHER" id="PTHR48020:SF35">
    <property type="entry name" value="SUGAR TRANSPORTER"/>
    <property type="match status" value="1"/>
</dbReference>
<dbReference type="Pfam" id="PF00083">
    <property type="entry name" value="Sugar_tr"/>
    <property type="match status" value="2"/>
</dbReference>
<dbReference type="PRINTS" id="PR00171">
    <property type="entry name" value="SUGRTRNSPORT"/>
</dbReference>
<dbReference type="SUPFAM" id="SSF103473">
    <property type="entry name" value="MFS general substrate transporter"/>
    <property type="match status" value="1"/>
</dbReference>
<dbReference type="PROSITE" id="PS50850">
    <property type="entry name" value="MFS"/>
    <property type="match status" value="1"/>
</dbReference>
<dbReference type="PROSITE" id="PS00216">
    <property type="entry name" value="SUGAR_TRANSPORT_1"/>
    <property type="match status" value="1"/>
</dbReference>
<dbReference type="PROSITE" id="PS00217">
    <property type="entry name" value="SUGAR_TRANSPORT_2"/>
    <property type="match status" value="1"/>
</dbReference>
<protein>
    <recommendedName>
        <fullName evidence="8">Monosaccharide-sensing protein 2</fullName>
    </recommendedName>
    <alternativeName>
        <fullName evidence="8">Sugar transporter MSSP2</fullName>
    </alternativeName>
    <alternativeName>
        <fullName evidence="7">Tonoplast monosaccharide transporter 2</fullName>
        <shortName evidence="7">AtTMT2</shortName>
    </alternativeName>
</protein>
<feature type="chain" id="PRO_0000259883" description="Monosaccharide-sensing protein 2">
    <location>
        <begin position="1"/>
        <end position="729"/>
    </location>
</feature>
<feature type="transmembrane region" description="Helical; Name=1" evidence="2">
    <location>
        <begin position="1"/>
        <end position="21"/>
    </location>
</feature>
<feature type="transmembrane region" description="Helical; Name=2" evidence="2">
    <location>
        <begin position="47"/>
        <end position="67"/>
    </location>
</feature>
<feature type="transmembrane region" description="Helical; Name=3" evidence="2">
    <location>
        <begin position="81"/>
        <end position="101"/>
    </location>
</feature>
<feature type="transmembrane region" description="Helical; Name=4" evidence="2">
    <location>
        <begin position="104"/>
        <end position="124"/>
    </location>
</feature>
<feature type="transmembrane region" description="Helical; Name=5" evidence="2">
    <location>
        <begin position="139"/>
        <end position="159"/>
    </location>
</feature>
<feature type="transmembrane region" description="Helical; Name=6" evidence="2">
    <location>
        <begin position="165"/>
        <end position="185"/>
    </location>
</feature>
<feature type="transmembrane region" description="Helical; Name=7" evidence="2">
    <location>
        <begin position="507"/>
        <end position="527"/>
    </location>
</feature>
<feature type="transmembrane region" description="Helical; Name=8" evidence="2">
    <location>
        <begin position="553"/>
        <end position="573"/>
    </location>
</feature>
<feature type="transmembrane region" description="Helical; Name=9" evidence="2">
    <location>
        <begin position="585"/>
        <end position="605"/>
    </location>
</feature>
<feature type="transmembrane region" description="Helical; Name=10" evidence="2">
    <location>
        <begin position="610"/>
        <end position="630"/>
    </location>
</feature>
<feature type="transmembrane region" description="Helical; Name=11" evidence="2">
    <location>
        <begin position="650"/>
        <end position="670"/>
    </location>
</feature>
<feature type="transmembrane region" description="Helical; Name=12" evidence="2">
    <location>
        <begin position="679"/>
        <end position="699"/>
    </location>
</feature>
<feature type="region of interest" description="Disordered" evidence="3">
    <location>
        <begin position="347"/>
        <end position="367"/>
    </location>
</feature>
<feature type="region of interest" description="Disordered" evidence="3">
    <location>
        <begin position="423"/>
        <end position="442"/>
    </location>
</feature>
<feature type="compositionally biased region" description="Acidic residues" evidence="3">
    <location>
        <begin position="347"/>
        <end position="363"/>
    </location>
</feature>
<feature type="compositionally biased region" description="Basic and acidic residues" evidence="3">
    <location>
        <begin position="423"/>
        <end position="434"/>
    </location>
</feature>
<feature type="modified residue" description="Phosphoserine" evidence="1">
    <location>
        <position position="438"/>
    </location>
</feature>
<feature type="splice variant" id="VSP_061686" description="In isoform 3." evidence="8">
    <location>
        <begin position="1"/>
        <end position="154"/>
    </location>
</feature>
<feature type="splice variant" id="VSP_021553" description="In isoform 2 and isoform 3." evidence="6">
    <original>E</original>
    <variation>EGGFKRIYLHQ</variation>
    <location>
        <position position="432"/>
    </location>
</feature>
<feature type="modified residue" description="Phosphoserine" evidence="11">
    <location sequence="Q8LPQ8-2">
        <position position="448"/>
    </location>
</feature>
<keyword id="KW-0025">Alternative splicing</keyword>
<keyword id="KW-0472">Membrane</keyword>
<keyword id="KW-0597">Phosphoprotein</keyword>
<keyword id="KW-1185">Reference proteome</keyword>
<keyword id="KW-0762">Sugar transport</keyword>
<keyword id="KW-0812">Transmembrane</keyword>
<keyword id="KW-1133">Transmembrane helix</keyword>
<keyword id="KW-0813">Transport</keyword>
<keyword id="KW-0926">Vacuole</keyword>
<proteinExistence type="evidence at protein level"/>